<organism>
    <name type="scientific">Pseudomonas paraeruginosa (strain DSM 24068 / PA7)</name>
    <name type="common">Pseudomonas aeruginosa (strain PA7)</name>
    <dbReference type="NCBI Taxonomy" id="381754"/>
    <lineage>
        <taxon>Bacteria</taxon>
        <taxon>Pseudomonadati</taxon>
        <taxon>Pseudomonadota</taxon>
        <taxon>Gammaproteobacteria</taxon>
        <taxon>Pseudomonadales</taxon>
        <taxon>Pseudomonadaceae</taxon>
        <taxon>Pseudomonas</taxon>
        <taxon>Pseudomonas paraeruginosa</taxon>
    </lineage>
</organism>
<protein>
    <recommendedName>
        <fullName evidence="1">Glucans biosynthesis glucosyltransferase H</fullName>
        <ecNumber evidence="1">2.4.1.-</ecNumber>
    </recommendedName>
</protein>
<name>OPGH_PSEP7</name>
<evidence type="ECO:0000255" key="1">
    <source>
        <dbReference type="HAMAP-Rule" id="MF_01072"/>
    </source>
</evidence>
<comment type="function">
    <text evidence="1">Involved in the biosynthesis of osmoregulated periplasmic glucans (OPGs).</text>
</comment>
<comment type="pathway">
    <text evidence="1">Glycan metabolism; osmoregulated periplasmic glucan (OPG) biosynthesis.</text>
</comment>
<comment type="subcellular location">
    <subcellularLocation>
        <location evidence="1">Cell inner membrane</location>
        <topology evidence="1">Multi-pass membrane protein</topology>
    </subcellularLocation>
</comment>
<comment type="similarity">
    <text evidence="1">Belongs to the glycosyltransferase 2 family. OpgH subfamily.</text>
</comment>
<proteinExistence type="inferred from homology"/>
<keyword id="KW-0997">Cell inner membrane</keyword>
<keyword id="KW-1003">Cell membrane</keyword>
<keyword id="KW-0328">Glycosyltransferase</keyword>
<keyword id="KW-0472">Membrane</keyword>
<keyword id="KW-0808">Transferase</keyword>
<keyword id="KW-0812">Transmembrane</keyword>
<keyword id="KW-1133">Transmembrane helix</keyword>
<sequence length="860" mass="96937">MNNPSTPKAPLADYLAHLPLAEEERARLGESASFSELHARLAGEGAASEAGGDPALASVRARLQLGSPELDDAEMFGVDAQGRTFLKISPPIRRTKVIPEPWRTNILVRGWRRLTGRSNPPKPKRALPRARWQRVGSLRRFILLLLMLAQTSVATYYMKGILPYQGWAFVDLEELTRQSLLDTVQQVLPYVIQFGILALFAILFCWVSAGFWTALMGFWELLTGRDRYRISGSSAGSEPIAADARTAIVMPICNEDVPRVFAGLRATVESMAATGEMERFDFFVLSDTNDPDIAVAEQQAWLELCRETRGFGKIFYRRRRRRVKRKSGNIDDFCRRWGGDYRYMVVMDADSVMSGDCLAKLVRLMEANPEAGIIQTAPKASGMDTLYARMQQFATRVYGPLFTAGLHFWQLGESHYWGHNAIIRMQPFIDHCALAPLPGKGSFAGAILSHDFVEAALMRRAGWGVWIAYDLDGSYEELPPNLLDELKRDRRWCHGNLMNFRLFLVKGMHPVHRAVFLTGVMSYLSAPLWFFFLVLSTALLAVHQLMEPQYFLEPRQLFPIWPQWHPEKAIALFSTTLTLLFLPKLLSVMLIWAKGAKGFGGVIRVTLSMLLEMFFSVLLAPVRMLFHTRFVLAAFLGWSVQWNSPQRDDDATPWSEAIRRHGMQTLLGLAWTLLVAWLNPRFLWWLSPIVGSLMLSIPVSVISSRVKLGLRARDEKLFLIPEEYDTPRELRATDEYTYENRWHALKDGFLKAAVDPLLNALACAMGTARHNRAQAIETVRGERIGKAIEKGPEQLDGATRLALLSDPVALSRLHAQVWEENRDDWLGRWRKAEADDPHAASVPLAQVVPGDAGLLPAAQS</sequence>
<gene>
    <name evidence="1" type="primary">opgH</name>
    <name type="ordered locus">PSPA7_5816</name>
</gene>
<feature type="chain" id="PRO_1000064607" description="Glucans biosynthesis glucosyltransferase H">
    <location>
        <begin position="1"/>
        <end position="860"/>
    </location>
</feature>
<feature type="transmembrane region" description="Helical" evidence="1">
    <location>
        <begin position="141"/>
        <end position="161"/>
    </location>
</feature>
<feature type="transmembrane region" description="Helical" evidence="1">
    <location>
        <begin position="187"/>
        <end position="207"/>
    </location>
</feature>
<feature type="transmembrane region" description="Helical" evidence="1">
    <location>
        <begin position="515"/>
        <end position="535"/>
    </location>
</feature>
<feature type="transmembrane region" description="Helical" evidence="1">
    <location>
        <begin position="572"/>
        <end position="592"/>
    </location>
</feature>
<feature type="transmembrane region" description="Helical" evidence="1">
    <location>
        <begin position="599"/>
        <end position="619"/>
    </location>
</feature>
<feature type="transmembrane region" description="Helical" evidence="1">
    <location>
        <begin position="682"/>
        <end position="702"/>
    </location>
</feature>
<dbReference type="EC" id="2.4.1.-" evidence="1"/>
<dbReference type="EMBL" id="CP000744">
    <property type="protein sequence ID" value="ABR83940.1"/>
    <property type="molecule type" value="Genomic_DNA"/>
</dbReference>
<dbReference type="RefSeq" id="WP_012077743.1">
    <property type="nucleotide sequence ID" value="NC_009656.1"/>
</dbReference>
<dbReference type="CAZy" id="GT2">
    <property type="family name" value="Glycosyltransferase Family 2"/>
</dbReference>
<dbReference type="GeneID" id="77223614"/>
<dbReference type="KEGG" id="pap:PSPA7_5816"/>
<dbReference type="HOGENOM" id="CLU_015730_0_0_6"/>
<dbReference type="UniPathway" id="UPA00637"/>
<dbReference type="Proteomes" id="UP000001582">
    <property type="component" value="Chromosome"/>
</dbReference>
<dbReference type="GO" id="GO:0005886">
    <property type="term" value="C:plasma membrane"/>
    <property type="evidence" value="ECO:0007669"/>
    <property type="project" value="UniProtKB-SubCell"/>
</dbReference>
<dbReference type="GO" id="GO:0016758">
    <property type="term" value="F:hexosyltransferase activity"/>
    <property type="evidence" value="ECO:0007669"/>
    <property type="project" value="UniProtKB-UniRule"/>
</dbReference>
<dbReference type="GO" id="GO:0009250">
    <property type="term" value="P:glucan biosynthetic process"/>
    <property type="evidence" value="ECO:0007669"/>
    <property type="project" value="UniProtKB-UniRule"/>
</dbReference>
<dbReference type="CDD" id="cd04191">
    <property type="entry name" value="Glucan_BSP_MdoH"/>
    <property type="match status" value="1"/>
</dbReference>
<dbReference type="FunFam" id="3.90.550.10:FF:000047">
    <property type="entry name" value="Glucans biosynthesis glucosyltransferase H"/>
    <property type="match status" value="1"/>
</dbReference>
<dbReference type="Gene3D" id="3.90.550.10">
    <property type="entry name" value="Spore Coat Polysaccharide Biosynthesis Protein SpsA, Chain A"/>
    <property type="match status" value="1"/>
</dbReference>
<dbReference type="HAMAP" id="MF_01072">
    <property type="entry name" value="MdoH_OpgH"/>
    <property type="match status" value="1"/>
</dbReference>
<dbReference type="InterPro" id="IPR023725">
    <property type="entry name" value="Glucans_biosynth_gluTrFase_H"/>
</dbReference>
<dbReference type="InterPro" id="IPR001173">
    <property type="entry name" value="Glyco_trans_2-like"/>
</dbReference>
<dbReference type="InterPro" id="IPR050321">
    <property type="entry name" value="Glycosyltr_2/OpgH_subfam"/>
</dbReference>
<dbReference type="InterPro" id="IPR029044">
    <property type="entry name" value="Nucleotide-diphossugar_trans"/>
</dbReference>
<dbReference type="NCBIfam" id="NF003955">
    <property type="entry name" value="PRK05454.1-1"/>
    <property type="match status" value="1"/>
</dbReference>
<dbReference type="NCBIfam" id="NF003958">
    <property type="entry name" value="PRK05454.2-1"/>
    <property type="match status" value="1"/>
</dbReference>
<dbReference type="NCBIfam" id="NF003962">
    <property type="entry name" value="PRK05454.2-5"/>
    <property type="match status" value="1"/>
</dbReference>
<dbReference type="PANTHER" id="PTHR43867">
    <property type="entry name" value="CELLULOSE SYNTHASE CATALYTIC SUBUNIT A [UDP-FORMING]"/>
    <property type="match status" value="1"/>
</dbReference>
<dbReference type="PANTHER" id="PTHR43867:SF5">
    <property type="entry name" value="GLUCANS BIOSYNTHESIS GLUCOSYLTRANSFERASE H"/>
    <property type="match status" value="1"/>
</dbReference>
<dbReference type="Pfam" id="PF00535">
    <property type="entry name" value="Glycos_transf_2"/>
    <property type="match status" value="1"/>
</dbReference>
<dbReference type="SUPFAM" id="SSF53448">
    <property type="entry name" value="Nucleotide-diphospho-sugar transferases"/>
    <property type="match status" value="1"/>
</dbReference>
<reference key="1">
    <citation type="submission" date="2007-06" db="EMBL/GenBank/DDBJ databases">
        <authorList>
            <person name="Dodson R.J."/>
            <person name="Harkins D."/>
            <person name="Paulsen I.T."/>
        </authorList>
    </citation>
    <scope>NUCLEOTIDE SEQUENCE [LARGE SCALE GENOMIC DNA]</scope>
    <source>
        <strain>DSM 24068 / PA7</strain>
    </source>
</reference>
<accession>A6VDK0</accession>